<feature type="chain" id="PRO_0000072436" description="Translocated actin-recruiting phosphoprotein">
    <location>
        <begin position="1"/>
        <end position="1005"/>
    </location>
</feature>
<feature type="region of interest" description="Disordered" evidence="1">
    <location>
        <begin position="1"/>
        <end position="36"/>
    </location>
</feature>
<feature type="region of interest" description="Disordered" evidence="1">
    <location>
        <begin position="74"/>
        <end position="128"/>
    </location>
</feature>
<feature type="region of interest" description="Disordered" evidence="1">
    <location>
        <begin position="191"/>
        <end position="214"/>
    </location>
</feature>
<feature type="region of interest" description="Disordered" evidence="1">
    <location>
        <begin position="343"/>
        <end position="365"/>
    </location>
</feature>
<feature type="region of interest" description="Disordered" evidence="1">
    <location>
        <begin position="611"/>
        <end position="645"/>
    </location>
</feature>
<feature type="region of interest" description="Disordered" evidence="1">
    <location>
        <begin position="661"/>
        <end position="748"/>
    </location>
</feature>
<feature type="region of interest" description="Disordered" evidence="1">
    <location>
        <begin position="792"/>
        <end position="847"/>
    </location>
</feature>
<feature type="compositionally biased region" description="Polar residues" evidence="1">
    <location>
        <begin position="1"/>
        <end position="10"/>
    </location>
</feature>
<feature type="compositionally biased region" description="Low complexity" evidence="1">
    <location>
        <begin position="11"/>
        <end position="36"/>
    </location>
</feature>
<feature type="compositionally biased region" description="Low complexity" evidence="1">
    <location>
        <begin position="74"/>
        <end position="121"/>
    </location>
</feature>
<feature type="compositionally biased region" description="Polar residues" evidence="1">
    <location>
        <begin position="191"/>
        <end position="205"/>
    </location>
</feature>
<feature type="compositionally biased region" description="Polar residues" evidence="1">
    <location>
        <begin position="343"/>
        <end position="357"/>
    </location>
</feature>
<feature type="compositionally biased region" description="Low complexity" evidence="1">
    <location>
        <begin position="661"/>
        <end position="700"/>
    </location>
</feature>
<feature type="compositionally biased region" description="Low complexity" evidence="1">
    <location>
        <begin position="715"/>
        <end position="734"/>
    </location>
</feature>
<feature type="compositionally biased region" description="Low complexity" evidence="1">
    <location>
        <begin position="831"/>
        <end position="846"/>
    </location>
</feature>
<comment type="function">
    <text evidence="2">Appears to initiate or participate in signaling events that regulate the actin recruitment, which ultimately leads to internalization.</text>
</comment>
<comment type="interaction">
    <interactant intactId="EBI-15605056">
        <id>Q6GX35</id>
    </interactant>
    <interactant intactId="EBI-367540">
        <id>P68135</id>
        <label>ACTA1</label>
    </interactant>
    <organismsDiffer>true</organismsDiffer>
    <experiments>4</experiments>
</comment>
<comment type="subcellular location">
    <subcellularLocation>
        <location>Secreted</location>
    </subcellularLocation>
    <text>Secreted via type III secretion system and translocated into host cell.</text>
</comment>
<comment type="PTM">
    <text>Phosphorylated on a tyrosine on attachment to the host cell. Tyrosine phosphorylation is temporally and spatially associated with recruitment of actin to the site of chlamydial entry. Phosphorylated Tarp seems to remain cytoplasmically exposed on the inclusion membrane at one side of internalized elementary bodies for several hours after entry.</text>
</comment>
<comment type="miscellaneous">
    <text>Transcribed from mid to late cycle in the chlamydial developmental cycle.</text>
</comment>
<comment type="similarity">
    <text evidence="3">Belongs to the chlamydial CPn_0572/CT_456/TC_0741 family.</text>
</comment>
<proteinExistence type="evidence at protein level"/>
<reference key="1">
    <citation type="journal article" date="2004" name="Proc. Natl. Acad. Sci. U.S.A.">
        <title>A chlamydial type III translocated protein is tyrosine-phosphorylated at the site of entry and associated with recruitment of actin.</title>
        <authorList>
            <person name="Clifton D.R."/>
            <person name="Fields K.A."/>
            <person name="Grieshaber S.S."/>
            <person name="Dooley C.A."/>
            <person name="Fischer E.R."/>
            <person name="Mead D.J."/>
            <person name="Carabeo R.A."/>
            <person name="Hackstadt T."/>
        </authorList>
    </citation>
    <scope>NUCLEOTIDE SEQUENCE [GENOMIC DNA]</scope>
    <scope>FUNCTION</scope>
</reference>
<reference key="2">
    <citation type="journal article" date="2008" name="Genome Res.">
        <title>Chlamydia trachomatis: genome sequence analysis of lymphogranuloma venereum isolates.</title>
        <authorList>
            <person name="Thomson N.R."/>
            <person name="Holden M.T.G."/>
            <person name="Carder C."/>
            <person name="Lennard N."/>
            <person name="Lockey S.J."/>
            <person name="Marsh P."/>
            <person name="Skipp P."/>
            <person name="O'Connor C.D."/>
            <person name="Goodhead I."/>
            <person name="Norbertzcak H."/>
            <person name="Harris B."/>
            <person name="Ormond D."/>
            <person name="Rance R."/>
            <person name="Quail M.A."/>
            <person name="Parkhill J."/>
            <person name="Stephens R.S."/>
            <person name="Clarke I.N."/>
        </authorList>
    </citation>
    <scope>NUCLEOTIDE SEQUENCE [LARGE SCALE GENOMIC DNA]</scope>
    <source>
        <strain>ATCC VR-902B / DSM 19102 / 434/Bu</strain>
    </source>
</reference>
<dbReference type="EMBL" id="AY623902">
    <property type="protein sequence ID" value="AAT47185.1"/>
    <property type="molecule type" value="Genomic_DNA"/>
</dbReference>
<dbReference type="EMBL" id="AM884176">
    <property type="protein sequence ID" value="CAP04155.1"/>
    <property type="molecule type" value="Genomic_DNA"/>
</dbReference>
<dbReference type="RefSeq" id="WP_009873825.1">
    <property type="nucleotide sequence ID" value="NC_010287.1"/>
</dbReference>
<dbReference type="RefSeq" id="YP_001654788.1">
    <property type="nucleotide sequence ID" value="NC_010287.1"/>
</dbReference>
<dbReference type="PCDDB" id="Q6GX35"/>
<dbReference type="DIP" id="DIP-61288N"/>
<dbReference type="IntAct" id="Q6GX35">
    <property type="interactions" value="1"/>
</dbReference>
<dbReference type="KEGG" id="ctb:CTL0716"/>
<dbReference type="PATRIC" id="fig|471472.4.peg.768"/>
<dbReference type="HOGENOM" id="CLU_011849_0_0_0"/>
<dbReference type="Proteomes" id="UP001154402">
    <property type="component" value="Chromosome"/>
</dbReference>
<dbReference type="GO" id="GO:0005576">
    <property type="term" value="C:extracellular region"/>
    <property type="evidence" value="ECO:0007669"/>
    <property type="project" value="UniProtKB-SubCell"/>
</dbReference>
<dbReference type="GO" id="GO:0051425">
    <property type="term" value="F:PTB domain binding"/>
    <property type="evidence" value="ECO:0000353"/>
    <property type="project" value="CAFA"/>
</dbReference>
<dbReference type="GO" id="GO:0042169">
    <property type="term" value="F:SH2 domain binding"/>
    <property type="evidence" value="ECO:0000353"/>
    <property type="project" value="CAFA"/>
</dbReference>
<dbReference type="GO" id="GO:0043066">
    <property type="term" value="P:negative regulation of apoptotic process"/>
    <property type="evidence" value="ECO:0000314"/>
    <property type="project" value="CAFA"/>
</dbReference>
<dbReference type="GO" id="GO:0070374">
    <property type="term" value="P:positive regulation of ERK1 and ERK2 cascade"/>
    <property type="evidence" value="ECO:0000314"/>
    <property type="project" value="CAFA"/>
</dbReference>
<dbReference type="GO" id="GO:0043410">
    <property type="term" value="P:positive regulation of MAPK cascade"/>
    <property type="evidence" value="ECO:0000314"/>
    <property type="project" value="CAFA"/>
</dbReference>
<dbReference type="GO" id="GO:0050731">
    <property type="term" value="P:positive regulation of peptidyl-tyrosine phosphorylation"/>
    <property type="evidence" value="ECO:0000314"/>
    <property type="project" value="CAFA"/>
</dbReference>
<dbReference type="DisProt" id="DP01472"/>
<dbReference type="InterPro" id="IPR053108">
    <property type="entry name" value="Chlamydial_TARP"/>
</dbReference>
<dbReference type="InterPro" id="IPR011443">
    <property type="entry name" value="DUF1547"/>
</dbReference>
<dbReference type="NCBIfam" id="NF033567">
    <property type="entry name" value="act_recrut_TARP"/>
    <property type="match status" value="1"/>
</dbReference>
<dbReference type="PANTHER" id="PTHR36975">
    <property type="match status" value="1"/>
</dbReference>
<dbReference type="PANTHER" id="PTHR36975:SF5">
    <property type="entry name" value="TRANSLOCATED ACTIN-RECRUITING PHOSPHOPROTEIN"/>
    <property type="match status" value="1"/>
</dbReference>
<dbReference type="Pfam" id="PF07577">
    <property type="entry name" value="DUF1547"/>
    <property type="match status" value="2"/>
</dbReference>
<accession>Q6GX35</accession>
<accession>B0B829</accession>
<keyword id="KW-0597">Phosphoprotein</keyword>
<keyword id="KW-0964">Secreted</keyword>
<keyword id="KW-0843">Virulence</keyword>
<protein>
    <recommendedName>
        <fullName>Translocated actin-recruiting phosphoprotein</fullName>
        <shortName>Tarp protein</shortName>
    </recommendedName>
</protein>
<sequence>MTNSISGDQPTVTTFTSSTTSASGASGSLGASSVSTTANATVTQTANATNSAATSSIQTTGETVVNYTNSASAPTVTVSTSSSSTQATATSNKTSQAVAGKITSPDTSESSETSSTSSSDHIPSDYEPISTTENIYENIYESIDDSSTSGPENTSGGAAALNSLRGSSYSNYDDAAADYEPISTTENIYESIDDSSTSDPENTSGGAAALNSLRGSSYSNYDDAAADYEPISTTENIYENIYESIDDSSTSGPENTSGGAAALNSLRGSSYSNYDDAAADYEPISTTENIYESIDDSSTSDPENTSGGAAAALNSLRGSSYSNYDDAAADYEPISTTENIYESIDDSSTSDPENTSGGAAALNSLRGSSYSNYDDAAADYEPISTTENIYENIYESIDGSSTSDPENTSGGAAAALNSLRGSSYTTGPRNEGVFGPGPEGLPDMSLPSYDPTNKTSLLTFLSNPHVKSKMLENSGHFVFIDTDRSSFILVPNGNWDQVCSIKVQNGKTKEDLDIKDLENMCAKFCTGFNKFSGDWDSRVEPMMSAKAGVASGGNLPNTVIINNKFKTCVAYGPWNSREASSGYTPSAWRRGHQVNFGEIFEKANDFNKINWGTQAGPSSEDDGISFSNETPGAGPAAAPSPTPSSIPVINVNVNVGGTNVNIRDTNVNTTNTTPTTQSTDASTDTSDIDNINTNNQTDDINTTDKDSDGAGGVNGDISETESSSGDDSGSVSSSESDKNASVGNDGPAMKDILSAVRKHLDVVYPGDNGGSTEGPLQANQTLGDIVQDMETTGTSQETVVSPWKGSTSSTGSAGGSGSVQTLLPSPPPTPSTTTLRTGTGATTTSLMMGGPIKADIITTGGGGRIPGGGTLEKLLPRIRAHLDISFDGQGDLVSTEEPQLGSIVNKFRKETGSGGIVASVESAPGKPGSAQVLTGTGGDKGNLFQAAAAVTQALGNVAGKVNLAIQGQKLSSLVNDDGKGSVGRDLFQAATQTTQALSSLIDTVG</sequence>
<name>TARP_CHLT2</name>
<evidence type="ECO:0000256" key="1">
    <source>
        <dbReference type="SAM" id="MobiDB-lite"/>
    </source>
</evidence>
<evidence type="ECO:0000269" key="2">
    <source>
    </source>
</evidence>
<evidence type="ECO:0000305" key="3"/>
<gene>
    <name type="primary">tarP</name>
    <name type="ordered locus">CTL0716</name>
</gene>
<organism>
    <name type="scientific">Chlamydia trachomatis serovar L2 (strain ATCC VR-902B / DSM 19102 / 434/Bu)</name>
    <dbReference type="NCBI Taxonomy" id="471472"/>
    <lineage>
        <taxon>Bacteria</taxon>
        <taxon>Pseudomonadati</taxon>
        <taxon>Chlamydiota</taxon>
        <taxon>Chlamydiia</taxon>
        <taxon>Chlamydiales</taxon>
        <taxon>Chlamydiaceae</taxon>
        <taxon>Chlamydia/Chlamydophila group</taxon>
        <taxon>Chlamydia</taxon>
    </lineage>
</organism>